<feature type="chain" id="PRO_0000250116" description="3-isopropylmalate dehydrogenase">
    <location>
        <begin position="1"/>
        <end position="364"/>
    </location>
</feature>
<feature type="binding site" evidence="1">
    <location>
        <begin position="79"/>
        <end position="92"/>
    </location>
    <ligand>
        <name>NAD(+)</name>
        <dbReference type="ChEBI" id="CHEBI:57540"/>
    </ligand>
</feature>
<feature type="binding site" evidence="1">
    <location>
        <position position="100"/>
    </location>
    <ligand>
        <name>substrate</name>
    </ligand>
</feature>
<feature type="binding site" evidence="1">
    <location>
        <position position="110"/>
    </location>
    <ligand>
        <name>substrate</name>
    </ligand>
</feature>
<feature type="binding site" evidence="1">
    <location>
        <position position="139"/>
    </location>
    <ligand>
        <name>substrate</name>
    </ligand>
</feature>
<feature type="binding site" evidence="1">
    <location>
        <position position="228"/>
    </location>
    <ligand>
        <name>Mg(2+)</name>
        <dbReference type="ChEBI" id="CHEBI:18420"/>
    </ligand>
</feature>
<feature type="binding site" evidence="1">
    <location>
        <position position="228"/>
    </location>
    <ligand>
        <name>substrate</name>
    </ligand>
</feature>
<feature type="binding site" evidence="1">
    <location>
        <position position="252"/>
    </location>
    <ligand>
        <name>Mg(2+)</name>
        <dbReference type="ChEBI" id="CHEBI:18420"/>
    </ligand>
</feature>
<feature type="binding site" evidence="1">
    <location>
        <position position="256"/>
    </location>
    <ligand>
        <name>Mg(2+)</name>
        <dbReference type="ChEBI" id="CHEBI:18420"/>
    </ligand>
</feature>
<feature type="binding site" evidence="1">
    <location>
        <begin position="286"/>
        <end position="298"/>
    </location>
    <ligand>
        <name>NAD(+)</name>
        <dbReference type="ChEBI" id="CHEBI:57540"/>
    </ligand>
</feature>
<feature type="site" description="Important for catalysis" evidence="1">
    <location>
        <position position="146"/>
    </location>
</feature>
<feature type="site" description="Important for catalysis" evidence="1">
    <location>
        <position position="196"/>
    </location>
</feature>
<comment type="function">
    <text evidence="1">Catalyzes the oxidation of 3-carboxy-2-hydroxy-4-methylpentanoate (3-isopropylmalate) to 3-carboxy-4-methyl-2-oxopentanoate. The product decarboxylates to 4-methyl-2 oxopentanoate.</text>
</comment>
<comment type="catalytic activity">
    <reaction evidence="1">
        <text>(2R,3S)-3-isopropylmalate + NAD(+) = 4-methyl-2-oxopentanoate + CO2 + NADH</text>
        <dbReference type="Rhea" id="RHEA:32271"/>
        <dbReference type="ChEBI" id="CHEBI:16526"/>
        <dbReference type="ChEBI" id="CHEBI:17865"/>
        <dbReference type="ChEBI" id="CHEBI:35121"/>
        <dbReference type="ChEBI" id="CHEBI:57540"/>
        <dbReference type="ChEBI" id="CHEBI:57945"/>
        <dbReference type="EC" id="1.1.1.85"/>
    </reaction>
</comment>
<comment type="cofactor">
    <cofactor evidence="1">
        <name>Mg(2+)</name>
        <dbReference type="ChEBI" id="CHEBI:18420"/>
    </cofactor>
    <cofactor evidence="1">
        <name>Mn(2+)</name>
        <dbReference type="ChEBI" id="CHEBI:29035"/>
    </cofactor>
    <text evidence="1">Binds 1 Mg(2+) or Mn(2+) ion per subunit.</text>
</comment>
<comment type="pathway">
    <text evidence="1">Amino-acid biosynthesis; L-leucine biosynthesis; L-leucine from 3-methyl-2-oxobutanoate: step 3/4.</text>
</comment>
<comment type="subunit">
    <text evidence="1">Homodimer.</text>
</comment>
<comment type="subcellular location">
    <subcellularLocation>
        <location evidence="1">Cytoplasm</location>
    </subcellularLocation>
</comment>
<comment type="similarity">
    <text evidence="1">Belongs to the isocitrate and isopropylmalate dehydrogenases family. LeuB type 1 subfamily.</text>
</comment>
<name>LEU3_ECOUT</name>
<keyword id="KW-0028">Amino-acid biosynthesis</keyword>
<keyword id="KW-0100">Branched-chain amino acid biosynthesis</keyword>
<keyword id="KW-0963">Cytoplasm</keyword>
<keyword id="KW-0432">Leucine biosynthesis</keyword>
<keyword id="KW-0460">Magnesium</keyword>
<keyword id="KW-0464">Manganese</keyword>
<keyword id="KW-0479">Metal-binding</keyword>
<keyword id="KW-0520">NAD</keyword>
<keyword id="KW-0560">Oxidoreductase</keyword>
<reference key="1">
    <citation type="journal article" date="2006" name="Proc. Natl. Acad. Sci. U.S.A.">
        <title>Identification of genes subject to positive selection in uropathogenic strains of Escherichia coli: a comparative genomics approach.</title>
        <authorList>
            <person name="Chen S.L."/>
            <person name="Hung C.-S."/>
            <person name="Xu J."/>
            <person name="Reigstad C.S."/>
            <person name="Magrini V."/>
            <person name="Sabo A."/>
            <person name="Blasiar D."/>
            <person name="Bieri T."/>
            <person name="Meyer R.R."/>
            <person name="Ozersky P."/>
            <person name="Armstrong J.R."/>
            <person name="Fulton R.S."/>
            <person name="Latreille J.P."/>
            <person name="Spieth J."/>
            <person name="Hooton T.M."/>
            <person name="Mardis E.R."/>
            <person name="Hultgren S.J."/>
            <person name="Gordon J.I."/>
        </authorList>
    </citation>
    <scope>NUCLEOTIDE SEQUENCE [LARGE SCALE GENOMIC DNA]</scope>
    <source>
        <strain>UTI89 / UPEC</strain>
    </source>
</reference>
<proteinExistence type="inferred from homology"/>
<dbReference type="EC" id="1.1.1.85" evidence="1"/>
<dbReference type="EMBL" id="CP000243">
    <property type="protein sequence ID" value="ABE05590.1"/>
    <property type="molecule type" value="Genomic_DNA"/>
</dbReference>
<dbReference type="SMR" id="Q1RGC4"/>
<dbReference type="KEGG" id="eci:UTI89_C0080"/>
<dbReference type="HOGENOM" id="CLU_031953_0_3_6"/>
<dbReference type="UniPathway" id="UPA00048">
    <property type="reaction ID" value="UER00072"/>
</dbReference>
<dbReference type="Proteomes" id="UP000001952">
    <property type="component" value="Chromosome"/>
</dbReference>
<dbReference type="GO" id="GO:0005829">
    <property type="term" value="C:cytosol"/>
    <property type="evidence" value="ECO:0007669"/>
    <property type="project" value="TreeGrafter"/>
</dbReference>
<dbReference type="GO" id="GO:0003862">
    <property type="term" value="F:3-isopropylmalate dehydrogenase activity"/>
    <property type="evidence" value="ECO:0007669"/>
    <property type="project" value="UniProtKB-UniRule"/>
</dbReference>
<dbReference type="GO" id="GO:0000287">
    <property type="term" value="F:magnesium ion binding"/>
    <property type="evidence" value="ECO:0007669"/>
    <property type="project" value="InterPro"/>
</dbReference>
<dbReference type="GO" id="GO:0051287">
    <property type="term" value="F:NAD binding"/>
    <property type="evidence" value="ECO:0007669"/>
    <property type="project" value="InterPro"/>
</dbReference>
<dbReference type="GO" id="GO:0009098">
    <property type="term" value="P:L-leucine biosynthetic process"/>
    <property type="evidence" value="ECO:0007669"/>
    <property type="project" value="UniProtKB-UniRule"/>
</dbReference>
<dbReference type="FunFam" id="3.40.718.10:FF:000004">
    <property type="entry name" value="3-isopropylmalate dehydrogenase"/>
    <property type="match status" value="1"/>
</dbReference>
<dbReference type="Gene3D" id="3.40.718.10">
    <property type="entry name" value="Isopropylmalate Dehydrogenase"/>
    <property type="match status" value="1"/>
</dbReference>
<dbReference type="HAMAP" id="MF_01033">
    <property type="entry name" value="LeuB_type1"/>
    <property type="match status" value="1"/>
</dbReference>
<dbReference type="InterPro" id="IPR019818">
    <property type="entry name" value="IsoCit/isopropylmalate_DH_CS"/>
</dbReference>
<dbReference type="InterPro" id="IPR024084">
    <property type="entry name" value="IsoPropMal-DH-like_dom"/>
</dbReference>
<dbReference type="InterPro" id="IPR004429">
    <property type="entry name" value="Isopropylmalate_DH"/>
</dbReference>
<dbReference type="NCBIfam" id="TIGR00169">
    <property type="entry name" value="leuB"/>
    <property type="match status" value="1"/>
</dbReference>
<dbReference type="PANTHER" id="PTHR42979">
    <property type="entry name" value="3-ISOPROPYLMALATE DEHYDROGENASE"/>
    <property type="match status" value="1"/>
</dbReference>
<dbReference type="PANTHER" id="PTHR42979:SF1">
    <property type="entry name" value="3-ISOPROPYLMALATE DEHYDROGENASE"/>
    <property type="match status" value="1"/>
</dbReference>
<dbReference type="Pfam" id="PF00180">
    <property type="entry name" value="Iso_dh"/>
    <property type="match status" value="1"/>
</dbReference>
<dbReference type="SMART" id="SM01329">
    <property type="entry name" value="Iso_dh"/>
    <property type="match status" value="1"/>
</dbReference>
<dbReference type="SUPFAM" id="SSF53659">
    <property type="entry name" value="Isocitrate/Isopropylmalate dehydrogenase-like"/>
    <property type="match status" value="1"/>
</dbReference>
<dbReference type="PROSITE" id="PS00470">
    <property type="entry name" value="IDH_IMDH"/>
    <property type="match status" value="1"/>
</dbReference>
<accession>Q1RGC4</accession>
<protein>
    <recommendedName>
        <fullName evidence="1">3-isopropylmalate dehydrogenase</fullName>
        <ecNumber evidence="1">1.1.1.85</ecNumber>
    </recommendedName>
    <alternativeName>
        <fullName evidence="1">3-IPM-DH</fullName>
    </alternativeName>
    <alternativeName>
        <fullName evidence="1">Beta-IPM dehydrogenase</fullName>
        <shortName evidence="1">IMDH</shortName>
    </alternativeName>
</protein>
<gene>
    <name evidence="1" type="primary">leuB</name>
    <name type="ordered locus">UTI89_C0080</name>
</gene>
<sequence>MMSKNYHIAVLPGDGIGPEVMTQALKVLDAVRNRFAMRITTSHYDVGGAAIDNHGQPLPPATVEGCEQADAVLFGSVGGPKWEHLPPDQQPERGALLPLRKHFKLFSNLRPAKLYQGLEAFCPLRADIAANGFDILCVRELTGGIYFGQPKGREGSGQYEKAFDTEVYHRFEIERIARIAFESARKRRHKVTSIDKANVLQSSILWREIVNEIATEYPDVELAHMYIDNATMQLIKDPSQFDVLLCSNLFGDILSDECAMITGSMGMLPSASLNEQGFGLYEPAGGSAPDIAGKNIANPIAQILSLALLLRYSLDADDAASAIERAINRALEEGIRTGDLARGAAAVSTDEMGDIIARYVAEGV</sequence>
<evidence type="ECO:0000255" key="1">
    <source>
        <dbReference type="HAMAP-Rule" id="MF_01033"/>
    </source>
</evidence>
<organism>
    <name type="scientific">Escherichia coli (strain UTI89 / UPEC)</name>
    <dbReference type="NCBI Taxonomy" id="364106"/>
    <lineage>
        <taxon>Bacteria</taxon>
        <taxon>Pseudomonadati</taxon>
        <taxon>Pseudomonadota</taxon>
        <taxon>Gammaproteobacteria</taxon>
        <taxon>Enterobacterales</taxon>
        <taxon>Enterobacteriaceae</taxon>
        <taxon>Escherichia</taxon>
    </lineage>
</organism>